<gene>
    <name evidence="1" type="primary">rlmH</name>
    <name type="ordered locus">BcerKBAB4_5252</name>
</gene>
<name>RLMH_BACMK</name>
<keyword id="KW-0963">Cytoplasm</keyword>
<keyword id="KW-0489">Methyltransferase</keyword>
<keyword id="KW-0698">rRNA processing</keyword>
<keyword id="KW-0949">S-adenosyl-L-methionine</keyword>
<keyword id="KW-0808">Transferase</keyword>
<dbReference type="EC" id="2.1.1.177" evidence="1"/>
<dbReference type="EMBL" id="CP000903">
    <property type="protein sequence ID" value="ABY46395.1"/>
    <property type="status" value="ALT_INIT"/>
    <property type="molecule type" value="Genomic_DNA"/>
</dbReference>
<dbReference type="SMR" id="A9VTJ5"/>
<dbReference type="KEGG" id="bwe:BcerKBAB4_5252"/>
<dbReference type="eggNOG" id="COG1576">
    <property type="taxonomic scope" value="Bacteria"/>
</dbReference>
<dbReference type="HOGENOM" id="CLU_100552_0_0_9"/>
<dbReference type="Proteomes" id="UP000002154">
    <property type="component" value="Chromosome"/>
</dbReference>
<dbReference type="GO" id="GO:0005737">
    <property type="term" value="C:cytoplasm"/>
    <property type="evidence" value="ECO:0007669"/>
    <property type="project" value="UniProtKB-SubCell"/>
</dbReference>
<dbReference type="GO" id="GO:0070038">
    <property type="term" value="F:rRNA (pseudouridine-N3-)-methyltransferase activity"/>
    <property type="evidence" value="ECO:0007669"/>
    <property type="project" value="UniProtKB-UniRule"/>
</dbReference>
<dbReference type="CDD" id="cd18081">
    <property type="entry name" value="RlmH-like"/>
    <property type="match status" value="1"/>
</dbReference>
<dbReference type="Gene3D" id="3.40.1280.10">
    <property type="match status" value="1"/>
</dbReference>
<dbReference type="HAMAP" id="MF_00658">
    <property type="entry name" value="23SrRNA_methyltr_H"/>
    <property type="match status" value="1"/>
</dbReference>
<dbReference type="InterPro" id="IPR029028">
    <property type="entry name" value="Alpha/beta_knot_MTases"/>
</dbReference>
<dbReference type="InterPro" id="IPR003742">
    <property type="entry name" value="RlmH-like"/>
</dbReference>
<dbReference type="InterPro" id="IPR029026">
    <property type="entry name" value="tRNA_m1G_MTases_N"/>
</dbReference>
<dbReference type="NCBIfam" id="NF000985">
    <property type="entry name" value="PRK00103.1-3"/>
    <property type="match status" value="1"/>
</dbReference>
<dbReference type="NCBIfam" id="TIGR00246">
    <property type="entry name" value="tRNA_RlmH_YbeA"/>
    <property type="match status" value="1"/>
</dbReference>
<dbReference type="PANTHER" id="PTHR33603">
    <property type="entry name" value="METHYLTRANSFERASE"/>
    <property type="match status" value="1"/>
</dbReference>
<dbReference type="PANTHER" id="PTHR33603:SF1">
    <property type="entry name" value="RIBOSOMAL RNA LARGE SUBUNIT METHYLTRANSFERASE H"/>
    <property type="match status" value="1"/>
</dbReference>
<dbReference type="Pfam" id="PF02590">
    <property type="entry name" value="SPOUT_MTase"/>
    <property type="match status" value="1"/>
</dbReference>
<dbReference type="PIRSF" id="PIRSF004505">
    <property type="entry name" value="MT_bac"/>
    <property type="match status" value="1"/>
</dbReference>
<dbReference type="SUPFAM" id="SSF75217">
    <property type="entry name" value="alpha/beta knot"/>
    <property type="match status" value="1"/>
</dbReference>
<feature type="chain" id="PRO_0000366562" description="Ribosomal RNA large subunit methyltransferase H">
    <location>
        <begin position="1"/>
        <end position="159"/>
    </location>
</feature>
<feature type="binding site" evidence="1">
    <location>
        <position position="76"/>
    </location>
    <ligand>
        <name>S-adenosyl-L-methionine</name>
        <dbReference type="ChEBI" id="CHEBI:59789"/>
    </ligand>
</feature>
<feature type="binding site" evidence="1">
    <location>
        <position position="108"/>
    </location>
    <ligand>
        <name>S-adenosyl-L-methionine</name>
        <dbReference type="ChEBI" id="CHEBI:59789"/>
    </ligand>
</feature>
<feature type="binding site" evidence="1">
    <location>
        <begin position="127"/>
        <end position="132"/>
    </location>
    <ligand>
        <name>S-adenosyl-L-methionine</name>
        <dbReference type="ChEBI" id="CHEBI:59789"/>
    </ligand>
</feature>
<comment type="function">
    <text evidence="1">Specifically methylates the pseudouridine at position 1915 (m3Psi1915) in 23S rRNA.</text>
</comment>
<comment type="catalytic activity">
    <reaction evidence="1">
        <text>pseudouridine(1915) in 23S rRNA + S-adenosyl-L-methionine = N(3)-methylpseudouridine(1915) in 23S rRNA + S-adenosyl-L-homocysteine + H(+)</text>
        <dbReference type="Rhea" id="RHEA:42752"/>
        <dbReference type="Rhea" id="RHEA-COMP:10221"/>
        <dbReference type="Rhea" id="RHEA-COMP:10222"/>
        <dbReference type="ChEBI" id="CHEBI:15378"/>
        <dbReference type="ChEBI" id="CHEBI:57856"/>
        <dbReference type="ChEBI" id="CHEBI:59789"/>
        <dbReference type="ChEBI" id="CHEBI:65314"/>
        <dbReference type="ChEBI" id="CHEBI:74486"/>
        <dbReference type="EC" id="2.1.1.177"/>
    </reaction>
</comment>
<comment type="subunit">
    <text evidence="1">Homodimer.</text>
</comment>
<comment type="subcellular location">
    <subcellularLocation>
        <location evidence="1">Cytoplasm</location>
    </subcellularLocation>
</comment>
<comment type="similarity">
    <text evidence="1">Belongs to the RNA methyltransferase RlmH family.</text>
</comment>
<comment type="sequence caution" evidence="2">
    <conflict type="erroneous initiation">
        <sequence resource="EMBL-CDS" id="ABY46395"/>
    </conflict>
</comment>
<proteinExistence type="inferred from homology"/>
<reference key="1">
    <citation type="journal article" date="2008" name="Chem. Biol. Interact.">
        <title>Extending the Bacillus cereus group genomics to putative food-borne pathogens of different toxicity.</title>
        <authorList>
            <person name="Lapidus A."/>
            <person name="Goltsman E."/>
            <person name="Auger S."/>
            <person name="Galleron N."/>
            <person name="Segurens B."/>
            <person name="Dossat C."/>
            <person name="Land M.L."/>
            <person name="Broussolle V."/>
            <person name="Brillard J."/>
            <person name="Guinebretiere M.-H."/>
            <person name="Sanchis V."/>
            <person name="Nguen-the C."/>
            <person name="Lereclus D."/>
            <person name="Richardson P."/>
            <person name="Wincker P."/>
            <person name="Weissenbach J."/>
            <person name="Ehrlich S.D."/>
            <person name="Sorokin A."/>
        </authorList>
    </citation>
    <scope>NUCLEOTIDE SEQUENCE [LARGE SCALE GENOMIC DNA]</scope>
    <source>
        <strain>KBAB4</strain>
    </source>
</reference>
<evidence type="ECO:0000255" key="1">
    <source>
        <dbReference type="HAMAP-Rule" id="MF_00658"/>
    </source>
</evidence>
<evidence type="ECO:0000305" key="2"/>
<accession>A9VTJ5</accession>
<protein>
    <recommendedName>
        <fullName evidence="1">Ribosomal RNA large subunit methyltransferase H</fullName>
        <ecNumber evidence="1">2.1.1.177</ecNumber>
    </recommendedName>
    <alternativeName>
        <fullName evidence="1">23S rRNA (pseudouridine1915-N3)-methyltransferase</fullName>
    </alternativeName>
    <alternativeName>
        <fullName evidence="1">23S rRNA m3Psi1915 methyltransferase</fullName>
    </alternativeName>
    <alternativeName>
        <fullName evidence="1">rRNA (pseudouridine-N3-)-methyltransferase RlmH</fullName>
    </alternativeName>
</protein>
<sequence length="159" mass="17929">MNISIISIGKLKEKYLKQGIAEYLKRLSSYAKVEVIELPDEKAPENLSAAEMLIVKEKEGIRILDKISDDTHVIALAIEGKQKSSEEFAVSIDRLATYGKSKITFVIGGSLGLSSEVMKRSNESLSFSKMTLPHQLMRLVLLEQVYRAFRINRGEPYHK</sequence>
<organism>
    <name type="scientific">Bacillus mycoides (strain KBAB4)</name>
    <name type="common">Bacillus weihenstephanensis</name>
    <dbReference type="NCBI Taxonomy" id="315730"/>
    <lineage>
        <taxon>Bacteria</taxon>
        <taxon>Bacillati</taxon>
        <taxon>Bacillota</taxon>
        <taxon>Bacilli</taxon>
        <taxon>Bacillales</taxon>
        <taxon>Bacillaceae</taxon>
        <taxon>Bacillus</taxon>
        <taxon>Bacillus cereus group</taxon>
    </lineage>
</organism>